<proteinExistence type="evidence at transcript level"/>
<feature type="chain" id="PRO_0000195250" description="Probable glycerol-3-phosphate acyltransferase 2">
    <location>
        <begin position="1"/>
        <end position="530"/>
    </location>
</feature>
<feature type="transmembrane region" description="Helical" evidence="2">
    <location>
        <begin position="70"/>
        <end position="90"/>
    </location>
</feature>
<feature type="transmembrane region" description="Helical" evidence="2">
    <location>
        <begin position="93"/>
        <end position="113"/>
    </location>
</feature>
<feature type="transmembrane region" description="Helical" evidence="2">
    <location>
        <begin position="275"/>
        <end position="295"/>
    </location>
</feature>
<feature type="short sequence motif" description="HXXXXD motif">
    <location>
        <begin position="339"/>
        <end position="344"/>
    </location>
</feature>
<evidence type="ECO:0000250" key="1"/>
<evidence type="ECO:0000255" key="2"/>
<evidence type="ECO:0000269" key="3">
    <source>
    </source>
</evidence>
<evidence type="ECO:0000305" key="4"/>
<sequence length="530" mass="59968">MSGNKISTLQALVFFLYRFFILRRWCHRSPKQKYQKCPSHGLHQYQDLSNHTLIFNVEGALLKSNSLFPYFMVVAFEAGGVIRSLFLLVLYPFISLMSYEMGLKTMVMLSFFGVKKESFRVGKSVLPKYFLEDVGLEMFQVLKRGGKRVAVSDLPQVMIDVFLRDYLEIEVVVGRDMKMVGGYYLGIVEDKKNLEIAFDKVVQEERLGSGRRLIGITSFNSPSHRSLFSQFCQEIYFVRNSDKKSWQTLPQDQYPKPLIFHDGRLAVKPTPLNTLVLFMWAPFAAVLAAARLVFGLNLPYSLANPFLAFSGIHLTLTVNNHNDLISADRKRGCLFVCNHRTLLDPLYISYALRKKNMKAVTYSLSRLSELLAPIKTVRLTRDRVKDGQAMEKLLSQGDLVVCPEGTTCREPYLLRFSPLFSEVCDVIVPVAIDSHVTFFYGTTASGLKAFDPIFFLLNPFPSYTVKLLDPVSGSSSSTCRGVPDNGKVNFEVANHVQHEIGNALGFECTNLTRRDKYLILAGNNGVVKKK</sequence>
<gene>
    <name type="primary">GPAT2</name>
    <name type="ordered locus">At1g02390</name>
    <name type="ORF">T6A9.17</name>
    <name type="ORF">T6A9.8</name>
</gene>
<reference key="1">
    <citation type="journal article" date="2000" name="Nature">
        <title>Sequence and analysis of chromosome 1 of the plant Arabidopsis thaliana.</title>
        <authorList>
            <person name="Theologis A."/>
            <person name="Ecker J.R."/>
            <person name="Palm C.J."/>
            <person name="Federspiel N.A."/>
            <person name="Kaul S."/>
            <person name="White O."/>
            <person name="Alonso J."/>
            <person name="Altafi H."/>
            <person name="Araujo R."/>
            <person name="Bowman C.L."/>
            <person name="Brooks S.Y."/>
            <person name="Buehler E."/>
            <person name="Chan A."/>
            <person name="Chao Q."/>
            <person name="Chen H."/>
            <person name="Cheuk R.F."/>
            <person name="Chin C.W."/>
            <person name="Chung M.K."/>
            <person name="Conn L."/>
            <person name="Conway A.B."/>
            <person name="Conway A.R."/>
            <person name="Creasy T.H."/>
            <person name="Dewar K."/>
            <person name="Dunn P."/>
            <person name="Etgu P."/>
            <person name="Feldblyum T.V."/>
            <person name="Feng J.-D."/>
            <person name="Fong B."/>
            <person name="Fujii C.Y."/>
            <person name="Gill J.E."/>
            <person name="Goldsmith A.D."/>
            <person name="Haas B."/>
            <person name="Hansen N.F."/>
            <person name="Hughes B."/>
            <person name="Huizar L."/>
            <person name="Hunter J.L."/>
            <person name="Jenkins J."/>
            <person name="Johnson-Hopson C."/>
            <person name="Khan S."/>
            <person name="Khaykin E."/>
            <person name="Kim C.J."/>
            <person name="Koo H.L."/>
            <person name="Kremenetskaia I."/>
            <person name="Kurtz D.B."/>
            <person name="Kwan A."/>
            <person name="Lam B."/>
            <person name="Langin-Hooper S."/>
            <person name="Lee A."/>
            <person name="Lee J.M."/>
            <person name="Lenz C.A."/>
            <person name="Li J.H."/>
            <person name="Li Y.-P."/>
            <person name="Lin X."/>
            <person name="Liu S.X."/>
            <person name="Liu Z.A."/>
            <person name="Luros J.S."/>
            <person name="Maiti R."/>
            <person name="Marziali A."/>
            <person name="Militscher J."/>
            <person name="Miranda M."/>
            <person name="Nguyen M."/>
            <person name="Nierman W.C."/>
            <person name="Osborne B.I."/>
            <person name="Pai G."/>
            <person name="Peterson J."/>
            <person name="Pham P.K."/>
            <person name="Rizzo M."/>
            <person name="Rooney T."/>
            <person name="Rowley D."/>
            <person name="Sakano H."/>
            <person name="Salzberg S.L."/>
            <person name="Schwartz J.R."/>
            <person name="Shinn P."/>
            <person name="Southwick A.M."/>
            <person name="Sun H."/>
            <person name="Tallon L.J."/>
            <person name="Tambunga G."/>
            <person name="Toriumi M.J."/>
            <person name="Town C.D."/>
            <person name="Utterback T."/>
            <person name="Van Aken S."/>
            <person name="Vaysberg M."/>
            <person name="Vysotskaia V.S."/>
            <person name="Walker M."/>
            <person name="Wu D."/>
            <person name="Yu G."/>
            <person name="Fraser C.M."/>
            <person name="Venter J.C."/>
            <person name="Davis R.W."/>
        </authorList>
    </citation>
    <scope>NUCLEOTIDE SEQUENCE [LARGE SCALE GENOMIC DNA]</scope>
    <source>
        <strain>cv. Columbia</strain>
    </source>
</reference>
<reference key="2">
    <citation type="journal article" date="2017" name="Plant J.">
        <title>Araport11: a complete reannotation of the Arabidopsis thaliana reference genome.</title>
        <authorList>
            <person name="Cheng C.Y."/>
            <person name="Krishnakumar V."/>
            <person name="Chan A.P."/>
            <person name="Thibaud-Nissen F."/>
            <person name="Schobel S."/>
            <person name="Town C.D."/>
        </authorList>
    </citation>
    <scope>GENOME REANNOTATION</scope>
    <source>
        <strain>cv. Columbia</strain>
    </source>
</reference>
<reference key="3">
    <citation type="journal article" date="2003" name="Science">
        <title>Empirical analysis of transcriptional activity in the Arabidopsis genome.</title>
        <authorList>
            <person name="Yamada K."/>
            <person name="Lim J."/>
            <person name="Dale J.M."/>
            <person name="Chen H."/>
            <person name="Shinn P."/>
            <person name="Palm C.J."/>
            <person name="Southwick A.M."/>
            <person name="Wu H.C."/>
            <person name="Kim C.J."/>
            <person name="Nguyen M."/>
            <person name="Pham P.K."/>
            <person name="Cheuk R.F."/>
            <person name="Karlin-Newmann G."/>
            <person name="Liu S.X."/>
            <person name="Lam B."/>
            <person name="Sakano H."/>
            <person name="Wu T."/>
            <person name="Yu G."/>
            <person name="Miranda M."/>
            <person name="Quach H.L."/>
            <person name="Tripp M."/>
            <person name="Chang C.H."/>
            <person name="Lee J.M."/>
            <person name="Toriumi M.J."/>
            <person name="Chan M.M."/>
            <person name="Tang C.C."/>
            <person name="Onodera C.S."/>
            <person name="Deng J.M."/>
            <person name="Akiyama K."/>
            <person name="Ansari Y."/>
            <person name="Arakawa T."/>
            <person name="Banh J."/>
            <person name="Banno F."/>
            <person name="Bowser L."/>
            <person name="Brooks S.Y."/>
            <person name="Carninci P."/>
            <person name="Chao Q."/>
            <person name="Choy N."/>
            <person name="Enju A."/>
            <person name="Goldsmith A.D."/>
            <person name="Gurjal M."/>
            <person name="Hansen N.F."/>
            <person name="Hayashizaki Y."/>
            <person name="Johnson-Hopson C."/>
            <person name="Hsuan V.W."/>
            <person name="Iida K."/>
            <person name="Karnes M."/>
            <person name="Khan S."/>
            <person name="Koesema E."/>
            <person name="Ishida J."/>
            <person name="Jiang P.X."/>
            <person name="Jones T."/>
            <person name="Kawai J."/>
            <person name="Kamiya A."/>
            <person name="Meyers C."/>
            <person name="Nakajima M."/>
            <person name="Narusaka M."/>
            <person name="Seki M."/>
            <person name="Sakurai T."/>
            <person name="Satou M."/>
            <person name="Tamse R."/>
            <person name="Vaysberg M."/>
            <person name="Wallender E.K."/>
            <person name="Wong C."/>
            <person name="Yamamura Y."/>
            <person name="Yuan S."/>
            <person name="Shinozaki K."/>
            <person name="Davis R.W."/>
            <person name="Theologis A."/>
            <person name="Ecker J.R."/>
        </authorList>
    </citation>
    <scope>NUCLEOTIDE SEQUENCE [LARGE SCALE MRNA]</scope>
    <source>
        <strain>cv. Columbia</strain>
    </source>
</reference>
<reference key="4">
    <citation type="journal article" date="2003" name="Plant Cell">
        <title>Arabidopsis AtGPAT1, a member of the membrane-bound glycerol-3-phosphate acyltransferase gene family, is essential for tapetum differentiation and male fertility.</title>
        <authorList>
            <person name="Zheng Z."/>
            <person name="Xia Q."/>
            <person name="Dauk M."/>
            <person name="Shen W."/>
            <person name="Selvaraj G."/>
            <person name="Zou J."/>
        </authorList>
    </citation>
    <scope>TISSUE SPECIFICITY</scope>
</reference>
<name>GPAT2_ARATH</name>
<keyword id="KW-0012">Acyltransferase</keyword>
<keyword id="KW-0444">Lipid biosynthesis</keyword>
<keyword id="KW-0443">Lipid metabolism</keyword>
<keyword id="KW-0472">Membrane</keyword>
<keyword id="KW-0594">Phospholipid biosynthesis</keyword>
<keyword id="KW-1208">Phospholipid metabolism</keyword>
<keyword id="KW-1185">Reference proteome</keyword>
<keyword id="KW-0808">Transferase</keyword>
<keyword id="KW-0812">Transmembrane</keyword>
<keyword id="KW-1133">Transmembrane helix</keyword>
<organism>
    <name type="scientific">Arabidopsis thaliana</name>
    <name type="common">Mouse-ear cress</name>
    <dbReference type="NCBI Taxonomy" id="3702"/>
    <lineage>
        <taxon>Eukaryota</taxon>
        <taxon>Viridiplantae</taxon>
        <taxon>Streptophyta</taxon>
        <taxon>Embryophyta</taxon>
        <taxon>Tracheophyta</taxon>
        <taxon>Spermatophyta</taxon>
        <taxon>Magnoliopsida</taxon>
        <taxon>eudicotyledons</taxon>
        <taxon>Gunneridae</taxon>
        <taxon>Pentapetalae</taxon>
        <taxon>rosids</taxon>
        <taxon>malvids</taxon>
        <taxon>Brassicales</taxon>
        <taxon>Brassicaceae</taxon>
        <taxon>Camelineae</taxon>
        <taxon>Arabidopsis</taxon>
    </lineage>
</organism>
<protein>
    <recommendedName>
        <fullName>Probable glycerol-3-phosphate acyltransferase 2</fullName>
        <shortName>AtGPAT2</shortName>
        <ecNumber>2.3.1.15</ecNumber>
    </recommendedName>
</protein>
<accession>Q9FZ22</accession>
<comment type="function">
    <text evidence="1">Esterifies acyl-group from acyl-ACP to the sn-1 position of glycerol-3-phosphate, an essential step in glycerolipid biosynthesis.</text>
</comment>
<comment type="catalytic activity">
    <reaction>
        <text>sn-glycerol 3-phosphate + an acyl-CoA = a 1-acyl-sn-glycero-3-phosphate + CoA</text>
        <dbReference type="Rhea" id="RHEA:15325"/>
        <dbReference type="ChEBI" id="CHEBI:57287"/>
        <dbReference type="ChEBI" id="CHEBI:57597"/>
        <dbReference type="ChEBI" id="CHEBI:57970"/>
        <dbReference type="ChEBI" id="CHEBI:58342"/>
        <dbReference type="EC" id="2.3.1.15"/>
    </reaction>
</comment>
<comment type="pathway">
    <text>Phospholipid metabolism; CDP-diacylglycerol biosynthesis; CDP-diacylglycerol from sn-glycerol 3-phosphate: step 1/3.</text>
</comment>
<comment type="subcellular location">
    <subcellularLocation>
        <location evidence="4">Membrane</location>
        <topology evidence="4">Multi-pass membrane protein</topology>
    </subcellularLocation>
    <text>Not mitochondrial.</text>
</comment>
<comment type="tissue specificity">
    <text evidence="3">Weakly or not expressed in roots, leaves, seedlings, developing siliques and flower buds.</text>
</comment>
<comment type="domain">
    <text evidence="1">The HXXXXD motif is essential for acyltransferase activity and may constitute the binding site for the phosphate moiety of the glycerol-3-phosphate.</text>
</comment>
<comment type="similarity">
    <text evidence="4">Belongs to the GPAT/DAPAT family.</text>
</comment>
<dbReference type="EC" id="2.3.1.15"/>
<dbReference type="EMBL" id="AC064879">
    <property type="protein sequence ID" value="AAG00890.1"/>
    <property type="molecule type" value="Genomic_DNA"/>
</dbReference>
<dbReference type="EMBL" id="CP002684">
    <property type="protein sequence ID" value="AEE27423.1"/>
    <property type="molecule type" value="Genomic_DNA"/>
</dbReference>
<dbReference type="EMBL" id="AF419560">
    <property type="protein sequence ID" value="AAL31892.1"/>
    <property type="molecule type" value="mRNA"/>
</dbReference>
<dbReference type="EMBL" id="AY097339">
    <property type="protein sequence ID" value="AAM19855.1"/>
    <property type="molecule type" value="mRNA"/>
</dbReference>
<dbReference type="PIR" id="C86154">
    <property type="entry name" value="C86154"/>
</dbReference>
<dbReference type="RefSeq" id="NP_563651.1">
    <property type="nucleotide sequence ID" value="NM_100120.3"/>
</dbReference>
<dbReference type="STRING" id="3702.Q9FZ22"/>
<dbReference type="GlyGen" id="Q9FZ22">
    <property type="glycosylation" value="1 site"/>
</dbReference>
<dbReference type="PaxDb" id="3702-AT1G02390.1"/>
<dbReference type="ProteomicsDB" id="248462"/>
<dbReference type="EnsemblPlants" id="AT1G02390.1">
    <property type="protein sequence ID" value="AT1G02390.1"/>
    <property type="gene ID" value="AT1G02390"/>
</dbReference>
<dbReference type="GeneID" id="839558"/>
<dbReference type="Gramene" id="AT1G02390.1">
    <property type="protein sequence ID" value="AT1G02390.1"/>
    <property type="gene ID" value="AT1G02390"/>
</dbReference>
<dbReference type="KEGG" id="ath:AT1G02390"/>
<dbReference type="Araport" id="AT1G02390"/>
<dbReference type="TAIR" id="AT1G02390">
    <property type="gene designation" value="GPAT2"/>
</dbReference>
<dbReference type="eggNOG" id="ENOG502QRJ7">
    <property type="taxonomic scope" value="Eukaryota"/>
</dbReference>
<dbReference type="HOGENOM" id="CLU_028504_1_0_1"/>
<dbReference type="InParanoid" id="Q9FZ22"/>
<dbReference type="OMA" id="PLFSEVC"/>
<dbReference type="PhylomeDB" id="Q9FZ22"/>
<dbReference type="BioCyc" id="ARA:AT1G02390-MONOMER"/>
<dbReference type="BRENDA" id="2.3.1.15">
    <property type="organism ID" value="399"/>
</dbReference>
<dbReference type="UniPathway" id="UPA00557">
    <property type="reaction ID" value="UER00612"/>
</dbReference>
<dbReference type="PRO" id="PR:Q9FZ22"/>
<dbReference type="Proteomes" id="UP000006548">
    <property type="component" value="Chromosome 1"/>
</dbReference>
<dbReference type="ExpressionAtlas" id="Q9FZ22">
    <property type="expression patterns" value="baseline and differential"/>
</dbReference>
<dbReference type="GO" id="GO:0016020">
    <property type="term" value="C:membrane"/>
    <property type="evidence" value="ECO:0007669"/>
    <property type="project" value="UniProtKB-SubCell"/>
</dbReference>
<dbReference type="GO" id="GO:0090447">
    <property type="term" value="F:glycerol-3-phosphate 2-O-acyltransferase activity"/>
    <property type="evidence" value="ECO:0007669"/>
    <property type="project" value="UniProtKB-ARBA"/>
</dbReference>
<dbReference type="GO" id="GO:0004366">
    <property type="term" value="F:glycerol-3-phosphate O-acyltransferase activity"/>
    <property type="evidence" value="ECO:0007669"/>
    <property type="project" value="UniProtKB-EC"/>
</dbReference>
<dbReference type="GO" id="GO:0016024">
    <property type="term" value="P:CDP-diacylglycerol biosynthetic process"/>
    <property type="evidence" value="ECO:0007669"/>
    <property type="project" value="UniProtKB-UniPathway"/>
</dbReference>
<dbReference type="CDD" id="cd06551">
    <property type="entry name" value="LPLAT"/>
    <property type="match status" value="1"/>
</dbReference>
<dbReference type="InterPro" id="IPR056462">
    <property type="entry name" value="HAD_RAM2/GPAT1-8"/>
</dbReference>
<dbReference type="InterPro" id="IPR002123">
    <property type="entry name" value="Plipid/glycerol_acylTrfase"/>
</dbReference>
<dbReference type="PANTHER" id="PTHR15486">
    <property type="entry name" value="ANCIENT UBIQUITOUS PROTEIN"/>
    <property type="match status" value="1"/>
</dbReference>
<dbReference type="PANTHER" id="PTHR15486:SF62">
    <property type="entry name" value="GLYCEROL-3-PHOSPHATE ACYLTRANSFERASE 2-RELATED"/>
    <property type="match status" value="1"/>
</dbReference>
<dbReference type="Pfam" id="PF01553">
    <property type="entry name" value="Acyltransferase"/>
    <property type="match status" value="1"/>
</dbReference>
<dbReference type="Pfam" id="PF23270">
    <property type="entry name" value="HAD_RAM2_N"/>
    <property type="match status" value="1"/>
</dbReference>
<dbReference type="SMART" id="SM00563">
    <property type="entry name" value="PlsC"/>
    <property type="match status" value="1"/>
</dbReference>
<dbReference type="SUPFAM" id="SSF69593">
    <property type="entry name" value="Glycerol-3-phosphate (1)-acyltransferase"/>
    <property type="match status" value="1"/>
</dbReference>